<keyword id="KW-0131">Cell cycle</keyword>
<keyword id="KW-0132">Cell division</keyword>
<keyword id="KW-0137">Centromere</keyword>
<keyword id="KW-0158">Chromosome</keyword>
<keyword id="KW-0159">Chromosome partition</keyword>
<keyword id="KW-0995">Kinetochore</keyword>
<keyword id="KW-0493">Microtubule</keyword>
<keyword id="KW-0498">Mitosis</keyword>
<keyword id="KW-0539">Nucleus</keyword>
<keyword id="KW-1185">Reference proteome</keyword>
<proteinExistence type="evidence at protein level"/>
<name>CENPH_SCHPO</name>
<evidence type="ECO:0000250" key="1">
    <source>
        <dbReference type="UniProtKB" id="P43618"/>
    </source>
</evidence>
<evidence type="ECO:0000255" key="2"/>
<evidence type="ECO:0000269" key="3">
    <source>
    </source>
</evidence>
<sequence length="220" mass="24997">MDNNDQISNLCLGALQLLADQPISVISNEPSEEQRNEHVLKKWENNVLRHWKILFSLFMQTCGDSVQGNAAFSILNFMTTNSLVGQLYQRLYDESNSLGFISSPLNETEHLSEENLKIESSITFTSEEIEKEKENIKSVLLPSVQSISSSLELYASKESDYRSSIEGVLADLKLARARWEIVRNVTQILLLESGISFLENKKLAYIMDLCGDREDNYSSY</sequence>
<organism>
    <name type="scientific">Schizosaccharomyces pombe (strain 972 / ATCC 24843)</name>
    <name type="common">Fission yeast</name>
    <dbReference type="NCBI Taxonomy" id="284812"/>
    <lineage>
        <taxon>Eukaryota</taxon>
        <taxon>Fungi</taxon>
        <taxon>Dikarya</taxon>
        <taxon>Ascomycota</taxon>
        <taxon>Taphrinomycotina</taxon>
        <taxon>Schizosaccharomycetes</taxon>
        <taxon>Schizosaccharomycetales</taxon>
        <taxon>Schizosaccharomycetaceae</taxon>
        <taxon>Schizosaccharomyces</taxon>
    </lineage>
</organism>
<dbReference type="EMBL" id="CU329671">
    <property type="protein sequence ID" value="CAA21797.1"/>
    <property type="molecule type" value="Genomic_DNA"/>
</dbReference>
<dbReference type="PIR" id="T40806">
    <property type="entry name" value="T40806"/>
</dbReference>
<dbReference type="RefSeq" id="NP_596519.1">
    <property type="nucleotide sequence ID" value="NM_001022440.2"/>
</dbReference>
<dbReference type="SMR" id="O94261"/>
<dbReference type="BioGRID" id="277853">
    <property type="interactions" value="5"/>
</dbReference>
<dbReference type="STRING" id="284812.O94261"/>
<dbReference type="PaxDb" id="4896-SPBP8B7.12c.1"/>
<dbReference type="EnsemblFungi" id="SPBP8B7.12c.1">
    <property type="protein sequence ID" value="SPBP8B7.12c.1:pep"/>
    <property type="gene ID" value="SPBP8B7.12c"/>
</dbReference>
<dbReference type="PomBase" id="SPBP8B7.12c">
    <property type="gene designation" value="fta3"/>
</dbReference>
<dbReference type="VEuPathDB" id="FungiDB:SPBP8B7.12c"/>
<dbReference type="HOGENOM" id="CLU_1235669_0_0_1"/>
<dbReference type="InParanoid" id="O94261"/>
<dbReference type="OMA" id="QREDRTY"/>
<dbReference type="PRO" id="PR:O94261"/>
<dbReference type="Proteomes" id="UP000002485">
    <property type="component" value="Chromosome II"/>
</dbReference>
<dbReference type="GO" id="GO:0005829">
    <property type="term" value="C:cytosol"/>
    <property type="evidence" value="ECO:0007005"/>
    <property type="project" value="PomBase"/>
</dbReference>
<dbReference type="GO" id="GO:0000776">
    <property type="term" value="C:kinetochore"/>
    <property type="evidence" value="ECO:0000314"/>
    <property type="project" value="PomBase"/>
</dbReference>
<dbReference type="GO" id="GO:0005874">
    <property type="term" value="C:microtubule"/>
    <property type="evidence" value="ECO:0007669"/>
    <property type="project" value="UniProtKB-KW"/>
</dbReference>
<dbReference type="GO" id="GO:0031511">
    <property type="term" value="C:Mis6-Sim4 complex"/>
    <property type="evidence" value="ECO:0000314"/>
    <property type="project" value="PomBase"/>
</dbReference>
<dbReference type="GO" id="GO:0005634">
    <property type="term" value="C:nucleus"/>
    <property type="evidence" value="ECO:0007005"/>
    <property type="project" value="PomBase"/>
</dbReference>
<dbReference type="GO" id="GO:0051301">
    <property type="term" value="P:cell division"/>
    <property type="evidence" value="ECO:0007669"/>
    <property type="project" value="UniProtKB-KW"/>
</dbReference>
<dbReference type="GO" id="GO:0051382">
    <property type="term" value="P:kinetochore assembly"/>
    <property type="evidence" value="ECO:0007669"/>
    <property type="project" value="InterPro"/>
</dbReference>
<dbReference type="GO" id="GO:0000070">
    <property type="term" value="P:mitotic sister chromatid segregation"/>
    <property type="evidence" value="ECO:0000305"/>
    <property type="project" value="PomBase"/>
</dbReference>
<dbReference type="InterPro" id="IPR008426">
    <property type="entry name" value="CENP-H_C"/>
</dbReference>
<dbReference type="Pfam" id="PF05837">
    <property type="entry name" value="CENP-H"/>
    <property type="match status" value="1"/>
</dbReference>
<gene>
    <name type="primary">fta3</name>
    <name type="synonym">sma3</name>
    <name type="ORF">SPBP8B7.12c</name>
</gene>
<feature type="chain" id="PRO_0000290639" description="Inner kinetochore subunit fta3">
    <location>
        <begin position="1"/>
        <end position="220"/>
    </location>
</feature>
<accession>O94261</accession>
<protein>
    <recommendedName>
        <fullName>Inner kinetochore subunit fta3</fullName>
    </recommendedName>
    <alternativeName>
        <fullName>CENP-H homolog</fullName>
    </alternativeName>
    <alternativeName>
        <fullName>Constitutive centromere-associated network protein fta3</fullName>
    </alternativeName>
    <alternativeName>
        <fullName>Sim4 complex subunit fta3</fullName>
    </alternativeName>
    <alternativeName>
        <fullName>Sim4-mal2-associated protein 3</fullName>
    </alternativeName>
</protein>
<comment type="function">
    <text evidence="1 3">Component of the kinetochore, a multiprotein complex that assembles on centromeric DNA and attaches chromosomes to spindle microtubules, mediating chromosome segregation and sister chromatid segregation during meiosis and mitosis. Component of the inner kinetochore constitutive centromere-associated network (CCAN), which serves as a structural platform for outer kinetochore assembly (By similarity). Fta2, fta3 and fta4 associate with the central core (cnt) and inner repeat (inr) region of the centromere (PubMed:16079914).</text>
</comment>
<comment type="subunit">
    <text evidence="3">Component of the inner kinetochore constitutive centromere-associated network (CCAN) (also known as central kinetochore Sim4 complex in fission yeast), which is composed of at least cnl2, cnp3, cnp20, fta1, fta2, fta3, fta4, fta6, fta7, mal2, mhf1, mhf2, mis6, mis15, mis17, sim4 and wip1.</text>
</comment>
<comment type="subcellular location">
    <subcellularLocation>
        <location>Nucleus</location>
    </subcellularLocation>
    <subcellularLocation>
        <location>Chromosome</location>
        <location>Centromere</location>
        <location>Kinetochore</location>
    </subcellularLocation>
</comment>
<comment type="similarity">
    <text evidence="2">Belongs to the CENP-H/MCM16 family.</text>
</comment>
<reference key="1">
    <citation type="journal article" date="2002" name="Nature">
        <title>The genome sequence of Schizosaccharomyces pombe.</title>
        <authorList>
            <person name="Wood V."/>
            <person name="Gwilliam R."/>
            <person name="Rajandream M.A."/>
            <person name="Lyne M.H."/>
            <person name="Lyne R."/>
            <person name="Stewart A."/>
            <person name="Sgouros J.G."/>
            <person name="Peat N."/>
            <person name="Hayles J."/>
            <person name="Baker S.G."/>
            <person name="Basham D."/>
            <person name="Bowman S."/>
            <person name="Brooks K."/>
            <person name="Brown D."/>
            <person name="Brown S."/>
            <person name="Chillingworth T."/>
            <person name="Churcher C.M."/>
            <person name="Collins M."/>
            <person name="Connor R."/>
            <person name="Cronin A."/>
            <person name="Davis P."/>
            <person name="Feltwell T."/>
            <person name="Fraser A."/>
            <person name="Gentles S."/>
            <person name="Goble A."/>
            <person name="Hamlin N."/>
            <person name="Harris D.E."/>
            <person name="Hidalgo J."/>
            <person name="Hodgson G."/>
            <person name="Holroyd S."/>
            <person name="Hornsby T."/>
            <person name="Howarth S."/>
            <person name="Huckle E.J."/>
            <person name="Hunt S."/>
            <person name="Jagels K."/>
            <person name="James K.D."/>
            <person name="Jones L."/>
            <person name="Jones M."/>
            <person name="Leather S."/>
            <person name="McDonald S."/>
            <person name="McLean J."/>
            <person name="Mooney P."/>
            <person name="Moule S."/>
            <person name="Mungall K.L."/>
            <person name="Murphy L.D."/>
            <person name="Niblett D."/>
            <person name="Odell C."/>
            <person name="Oliver K."/>
            <person name="O'Neil S."/>
            <person name="Pearson D."/>
            <person name="Quail M.A."/>
            <person name="Rabbinowitsch E."/>
            <person name="Rutherford K.M."/>
            <person name="Rutter S."/>
            <person name="Saunders D."/>
            <person name="Seeger K."/>
            <person name="Sharp S."/>
            <person name="Skelton J."/>
            <person name="Simmonds M.N."/>
            <person name="Squares R."/>
            <person name="Squares S."/>
            <person name="Stevens K."/>
            <person name="Taylor K."/>
            <person name="Taylor R.G."/>
            <person name="Tivey A."/>
            <person name="Walsh S.V."/>
            <person name="Warren T."/>
            <person name="Whitehead S."/>
            <person name="Woodward J.R."/>
            <person name="Volckaert G."/>
            <person name="Aert R."/>
            <person name="Robben J."/>
            <person name="Grymonprez B."/>
            <person name="Weltjens I."/>
            <person name="Vanstreels E."/>
            <person name="Rieger M."/>
            <person name="Schaefer M."/>
            <person name="Mueller-Auer S."/>
            <person name="Gabel C."/>
            <person name="Fuchs M."/>
            <person name="Duesterhoeft A."/>
            <person name="Fritzc C."/>
            <person name="Holzer E."/>
            <person name="Moestl D."/>
            <person name="Hilbert H."/>
            <person name="Borzym K."/>
            <person name="Langer I."/>
            <person name="Beck A."/>
            <person name="Lehrach H."/>
            <person name="Reinhardt R."/>
            <person name="Pohl T.M."/>
            <person name="Eger P."/>
            <person name="Zimmermann W."/>
            <person name="Wedler H."/>
            <person name="Wambutt R."/>
            <person name="Purnelle B."/>
            <person name="Goffeau A."/>
            <person name="Cadieu E."/>
            <person name="Dreano S."/>
            <person name="Gloux S."/>
            <person name="Lelaure V."/>
            <person name="Mottier S."/>
            <person name="Galibert F."/>
            <person name="Aves S.J."/>
            <person name="Xiang Z."/>
            <person name="Hunt C."/>
            <person name="Moore K."/>
            <person name="Hurst S.M."/>
            <person name="Lucas M."/>
            <person name="Rochet M."/>
            <person name="Gaillardin C."/>
            <person name="Tallada V.A."/>
            <person name="Garzon A."/>
            <person name="Thode G."/>
            <person name="Daga R.R."/>
            <person name="Cruzado L."/>
            <person name="Jimenez J."/>
            <person name="Sanchez M."/>
            <person name="del Rey F."/>
            <person name="Benito J."/>
            <person name="Dominguez A."/>
            <person name="Revuelta J.L."/>
            <person name="Moreno S."/>
            <person name="Armstrong J."/>
            <person name="Forsburg S.L."/>
            <person name="Cerutti L."/>
            <person name="Lowe T."/>
            <person name="McCombie W.R."/>
            <person name="Paulsen I."/>
            <person name="Potashkin J."/>
            <person name="Shpakovski G.V."/>
            <person name="Ussery D."/>
            <person name="Barrell B.G."/>
            <person name="Nurse P."/>
        </authorList>
    </citation>
    <scope>NUCLEOTIDE SEQUENCE [LARGE SCALE GENOMIC DNA]</scope>
    <source>
        <strain>972 / ATCC 24843</strain>
    </source>
</reference>
<reference key="2">
    <citation type="journal article" date="2005" name="EMBO J.">
        <title>Molecular analysis of kinetochore architecture in fission yeast.</title>
        <authorList>
            <person name="Liu X."/>
            <person name="McLeod I."/>
            <person name="Anderson S."/>
            <person name="Yates J.R. III"/>
            <person name="He X."/>
        </authorList>
    </citation>
    <scope>FUNCTION</scope>
    <scope>IDENTIFICATION IN THE SIM4 COMPLEX</scope>
    <scope>SUBCELLULAR LOCATION</scope>
</reference>
<reference key="3">
    <citation type="journal article" date="2006" name="Nat. Biotechnol.">
        <title>ORFeome cloning and global analysis of protein localization in the fission yeast Schizosaccharomyces pombe.</title>
        <authorList>
            <person name="Matsuyama A."/>
            <person name="Arai R."/>
            <person name="Yashiroda Y."/>
            <person name="Shirai A."/>
            <person name="Kamata A."/>
            <person name="Sekido S."/>
            <person name="Kobayashi Y."/>
            <person name="Hashimoto A."/>
            <person name="Hamamoto M."/>
            <person name="Hiraoka Y."/>
            <person name="Horinouchi S."/>
            <person name="Yoshida M."/>
        </authorList>
    </citation>
    <scope>SUBCELLULAR LOCATION [LARGE SCALE ANALYSIS]</scope>
</reference>